<name>RL6_SALNS</name>
<dbReference type="EMBL" id="CP001113">
    <property type="protein sequence ID" value="ACF61325.1"/>
    <property type="molecule type" value="Genomic_DNA"/>
</dbReference>
<dbReference type="RefSeq" id="WP_000091939.1">
    <property type="nucleotide sequence ID" value="NZ_CCMR01000003.1"/>
</dbReference>
<dbReference type="SMR" id="B4SUS5"/>
<dbReference type="KEGG" id="see:SNSL254_A3694"/>
<dbReference type="HOGENOM" id="CLU_065464_1_2_6"/>
<dbReference type="Proteomes" id="UP000008824">
    <property type="component" value="Chromosome"/>
</dbReference>
<dbReference type="GO" id="GO:0022625">
    <property type="term" value="C:cytosolic large ribosomal subunit"/>
    <property type="evidence" value="ECO:0007669"/>
    <property type="project" value="TreeGrafter"/>
</dbReference>
<dbReference type="GO" id="GO:0019843">
    <property type="term" value="F:rRNA binding"/>
    <property type="evidence" value="ECO:0007669"/>
    <property type="project" value="UniProtKB-UniRule"/>
</dbReference>
<dbReference type="GO" id="GO:0003735">
    <property type="term" value="F:structural constituent of ribosome"/>
    <property type="evidence" value="ECO:0007669"/>
    <property type="project" value="InterPro"/>
</dbReference>
<dbReference type="GO" id="GO:0002181">
    <property type="term" value="P:cytoplasmic translation"/>
    <property type="evidence" value="ECO:0007669"/>
    <property type="project" value="TreeGrafter"/>
</dbReference>
<dbReference type="FunFam" id="3.90.930.12:FF:000001">
    <property type="entry name" value="50S ribosomal protein L6"/>
    <property type="match status" value="1"/>
</dbReference>
<dbReference type="FunFam" id="3.90.930.12:FF:000002">
    <property type="entry name" value="50S ribosomal protein L6"/>
    <property type="match status" value="1"/>
</dbReference>
<dbReference type="Gene3D" id="3.90.930.12">
    <property type="entry name" value="Ribosomal protein L6, alpha-beta domain"/>
    <property type="match status" value="2"/>
</dbReference>
<dbReference type="HAMAP" id="MF_01365_B">
    <property type="entry name" value="Ribosomal_uL6_B"/>
    <property type="match status" value="1"/>
</dbReference>
<dbReference type="InterPro" id="IPR000702">
    <property type="entry name" value="Ribosomal_uL6-like"/>
</dbReference>
<dbReference type="InterPro" id="IPR036789">
    <property type="entry name" value="Ribosomal_uL6-like_a/b-dom_sf"/>
</dbReference>
<dbReference type="InterPro" id="IPR020040">
    <property type="entry name" value="Ribosomal_uL6_a/b-dom"/>
</dbReference>
<dbReference type="InterPro" id="IPR019906">
    <property type="entry name" value="Ribosomal_uL6_bac-type"/>
</dbReference>
<dbReference type="InterPro" id="IPR002358">
    <property type="entry name" value="Ribosomal_uL6_CS"/>
</dbReference>
<dbReference type="NCBIfam" id="TIGR03654">
    <property type="entry name" value="L6_bact"/>
    <property type="match status" value="1"/>
</dbReference>
<dbReference type="PANTHER" id="PTHR11655">
    <property type="entry name" value="60S/50S RIBOSOMAL PROTEIN L6/L9"/>
    <property type="match status" value="1"/>
</dbReference>
<dbReference type="PANTHER" id="PTHR11655:SF14">
    <property type="entry name" value="LARGE RIBOSOMAL SUBUNIT PROTEIN UL6M"/>
    <property type="match status" value="1"/>
</dbReference>
<dbReference type="Pfam" id="PF00347">
    <property type="entry name" value="Ribosomal_L6"/>
    <property type="match status" value="2"/>
</dbReference>
<dbReference type="PIRSF" id="PIRSF002162">
    <property type="entry name" value="Ribosomal_L6"/>
    <property type="match status" value="1"/>
</dbReference>
<dbReference type="PRINTS" id="PR00059">
    <property type="entry name" value="RIBOSOMALL6"/>
</dbReference>
<dbReference type="SUPFAM" id="SSF56053">
    <property type="entry name" value="Ribosomal protein L6"/>
    <property type="match status" value="2"/>
</dbReference>
<dbReference type="PROSITE" id="PS00525">
    <property type="entry name" value="RIBOSOMAL_L6_1"/>
    <property type="match status" value="1"/>
</dbReference>
<gene>
    <name evidence="1" type="primary">rplF</name>
    <name type="ordered locus">SNSL254_A3694</name>
</gene>
<comment type="function">
    <text evidence="1">This protein binds to the 23S rRNA, and is important in its secondary structure. It is located near the subunit interface in the base of the L7/L12 stalk, and near the tRNA binding site of the peptidyltransferase center.</text>
</comment>
<comment type="subunit">
    <text evidence="1">Part of the 50S ribosomal subunit.</text>
</comment>
<comment type="similarity">
    <text evidence="1">Belongs to the universal ribosomal protein uL6 family.</text>
</comment>
<accession>B4SUS5</accession>
<reference key="1">
    <citation type="journal article" date="2011" name="J. Bacteriol.">
        <title>Comparative genomics of 28 Salmonella enterica isolates: evidence for CRISPR-mediated adaptive sublineage evolution.</title>
        <authorList>
            <person name="Fricke W.F."/>
            <person name="Mammel M.K."/>
            <person name="McDermott P.F."/>
            <person name="Tartera C."/>
            <person name="White D.G."/>
            <person name="Leclerc J.E."/>
            <person name="Ravel J."/>
            <person name="Cebula T.A."/>
        </authorList>
    </citation>
    <scope>NUCLEOTIDE SEQUENCE [LARGE SCALE GENOMIC DNA]</scope>
    <source>
        <strain>SL254</strain>
    </source>
</reference>
<organism>
    <name type="scientific">Salmonella newport (strain SL254)</name>
    <dbReference type="NCBI Taxonomy" id="423368"/>
    <lineage>
        <taxon>Bacteria</taxon>
        <taxon>Pseudomonadati</taxon>
        <taxon>Pseudomonadota</taxon>
        <taxon>Gammaproteobacteria</taxon>
        <taxon>Enterobacterales</taxon>
        <taxon>Enterobacteriaceae</taxon>
        <taxon>Salmonella</taxon>
    </lineage>
</organism>
<proteinExistence type="inferred from homology"/>
<protein>
    <recommendedName>
        <fullName evidence="1">Large ribosomal subunit protein uL6</fullName>
    </recommendedName>
    <alternativeName>
        <fullName evidence="2">50S ribosomal protein L6</fullName>
    </alternativeName>
</protein>
<evidence type="ECO:0000255" key="1">
    <source>
        <dbReference type="HAMAP-Rule" id="MF_01365"/>
    </source>
</evidence>
<evidence type="ECO:0000305" key="2"/>
<keyword id="KW-0687">Ribonucleoprotein</keyword>
<keyword id="KW-0689">Ribosomal protein</keyword>
<keyword id="KW-0694">RNA-binding</keyword>
<keyword id="KW-0699">rRNA-binding</keyword>
<sequence>MSRVAKAPVVVPAGVDVKINGQVITIKGKNGELTRTLNDAVEVKHADNALTFGPRDGYADGWAQAGTARALLNSMVIGVTEGFTKKLQLVGVGYRAAVKGNVVNLSLGFSHPVDHQLPAGITAECPTQTEIVLKGADKQVIGQVAADLRAYRRPEPYKGKGVRYADEVVRTKEAKKK</sequence>
<feature type="chain" id="PRO_1000144045" description="Large ribosomal subunit protein uL6">
    <location>
        <begin position="1"/>
        <end position="177"/>
    </location>
</feature>